<evidence type="ECO:0000250" key="1"/>
<evidence type="ECO:0000305" key="2"/>
<protein>
    <recommendedName>
        <fullName>NADH-ubiquinone oxidoreductase 12 kDa subunit, mitochondrial</fullName>
    </recommendedName>
    <alternativeName>
        <fullName>Complex I-12kD</fullName>
        <shortName>CI-12kD</shortName>
    </alternativeName>
</protein>
<proteinExistence type="inferred from homology"/>
<accession>Q03015</accession>
<accession>Q7RVJ6</accession>
<comment type="function">
    <text evidence="1">Accessory subunit of the mitochondrial membrane respiratory chain NADH dehydrogenase (Complex I), that is believed not to be involved in catalysis. Complex I functions in the transfer of electrons from NADH to the respiratory chain. The immediate electron acceptor for the enzyme is believed to be ubiquinone (By similarity).</text>
</comment>
<comment type="subunit">
    <text>Complex I is composed of about 40 different subunits.</text>
</comment>
<comment type="subcellular location">
    <subcellularLocation>
        <location evidence="1">Mitochondrion inner membrane</location>
        <topology evidence="1">Peripheral membrane protein</topology>
        <orientation evidence="1">Matrix side</orientation>
    </subcellularLocation>
</comment>
<comment type="similarity">
    <text evidence="2">Belongs to the complex I NDUFS6 subunit family.</text>
</comment>
<name>NDUS6_NEUCR</name>
<reference key="1">
    <citation type="journal article" date="1993" name="Biochem. J.">
        <title>The 12.3 kDa subunit of complex I (respiratory-chain NADH dehydrogenase) from Neurospora crassa: cDNA cloning and chromosomal mapping of the gene.</title>
        <authorList>
            <person name="Videira A."/>
            <person name="Azevedo J.E."/>
            <person name="Werner S."/>
            <person name="Cabral P."/>
        </authorList>
    </citation>
    <scope>NUCLEOTIDE SEQUENCE [MRNA]</scope>
</reference>
<reference key="2">
    <citation type="journal article" date="2003" name="Nature">
        <title>The genome sequence of the filamentous fungus Neurospora crassa.</title>
        <authorList>
            <person name="Galagan J.E."/>
            <person name="Calvo S.E."/>
            <person name="Borkovich K.A."/>
            <person name="Selker E.U."/>
            <person name="Read N.D."/>
            <person name="Jaffe D.B."/>
            <person name="FitzHugh W."/>
            <person name="Ma L.-J."/>
            <person name="Smirnov S."/>
            <person name="Purcell S."/>
            <person name="Rehman B."/>
            <person name="Elkins T."/>
            <person name="Engels R."/>
            <person name="Wang S."/>
            <person name="Nielsen C.B."/>
            <person name="Butler J."/>
            <person name="Endrizzi M."/>
            <person name="Qui D."/>
            <person name="Ianakiev P."/>
            <person name="Bell-Pedersen D."/>
            <person name="Nelson M.A."/>
            <person name="Werner-Washburne M."/>
            <person name="Selitrennikoff C.P."/>
            <person name="Kinsey J.A."/>
            <person name="Braun E.L."/>
            <person name="Zelter A."/>
            <person name="Schulte U."/>
            <person name="Kothe G.O."/>
            <person name="Jedd G."/>
            <person name="Mewes H.-W."/>
            <person name="Staben C."/>
            <person name="Marcotte E."/>
            <person name="Greenberg D."/>
            <person name="Roy A."/>
            <person name="Foley K."/>
            <person name="Naylor J."/>
            <person name="Stange-Thomann N."/>
            <person name="Barrett R."/>
            <person name="Gnerre S."/>
            <person name="Kamal M."/>
            <person name="Kamvysselis M."/>
            <person name="Mauceli E.W."/>
            <person name="Bielke C."/>
            <person name="Rudd S."/>
            <person name="Frishman D."/>
            <person name="Krystofova S."/>
            <person name="Rasmussen C."/>
            <person name="Metzenberg R.L."/>
            <person name="Perkins D.D."/>
            <person name="Kroken S."/>
            <person name="Cogoni C."/>
            <person name="Macino G."/>
            <person name="Catcheside D.E.A."/>
            <person name="Li W."/>
            <person name="Pratt R.J."/>
            <person name="Osmani S.A."/>
            <person name="DeSouza C.P.C."/>
            <person name="Glass N.L."/>
            <person name="Orbach M.J."/>
            <person name="Berglund J.A."/>
            <person name="Voelker R."/>
            <person name="Yarden O."/>
            <person name="Plamann M."/>
            <person name="Seiler S."/>
            <person name="Dunlap J.C."/>
            <person name="Radford A."/>
            <person name="Aramayo R."/>
            <person name="Natvig D.O."/>
            <person name="Alex L.A."/>
            <person name="Mannhaupt G."/>
            <person name="Ebbole D.J."/>
            <person name="Freitag M."/>
            <person name="Paulsen I."/>
            <person name="Sachs M.S."/>
            <person name="Lander E.S."/>
            <person name="Nusbaum C."/>
            <person name="Birren B.W."/>
        </authorList>
    </citation>
    <scope>NUCLEOTIDE SEQUENCE [LARGE SCALE GENOMIC DNA]</scope>
    <source>
        <strain>ATCC 24698 / 74-OR23-1A / CBS 708.71 / DSM 1257 / FGSC 987</strain>
    </source>
</reference>
<dbReference type="EMBL" id="X68965">
    <property type="protein sequence ID" value="CAA48768.1"/>
    <property type="molecule type" value="mRNA"/>
</dbReference>
<dbReference type="EMBL" id="CM002236">
    <property type="protein sequence ID" value="EAA34627.1"/>
    <property type="molecule type" value="Genomic_DNA"/>
</dbReference>
<dbReference type="PIR" id="S32568">
    <property type="entry name" value="S32568"/>
</dbReference>
<dbReference type="SMR" id="Q03015"/>
<dbReference type="STRING" id="367110.Q03015"/>
<dbReference type="TCDB" id="3.D.1.6.2">
    <property type="family name" value="the h+ or na+-translocating nadh dehydrogenase (ndh) family"/>
</dbReference>
<dbReference type="PaxDb" id="5141-EFNCRP00000002922"/>
<dbReference type="EnsemblFungi" id="EAA34627">
    <property type="protein sequence ID" value="EAA34627"/>
    <property type="gene ID" value="NCU03093"/>
</dbReference>
<dbReference type="KEGG" id="ncr:NCU03093"/>
<dbReference type="VEuPathDB" id="FungiDB:NCU03093"/>
<dbReference type="HOGENOM" id="CLU_142967_0_0_1"/>
<dbReference type="InParanoid" id="Q03015"/>
<dbReference type="OMA" id="GYQKNDP"/>
<dbReference type="OrthoDB" id="10252718at2759"/>
<dbReference type="Proteomes" id="UP000001805">
    <property type="component" value="Chromosome 1, Linkage Group I"/>
</dbReference>
<dbReference type="GO" id="GO:0005743">
    <property type="term" value="C:mitochondrial inner membrane"/>
    <property type="evidence" value="ECO:0007669"/>
    <property type="project" value="UniProtKB-SubCell"/>
</dbReference>
<dbReference type="GO" id="GO:0045271">
    <property type="term" value="C:respiratory chain complex I"/>
    <property type="evidence" value="ECO:0000318"/>
    <property type="project" value="GO_Central"/>
</dbReference>
<dbReference type="InterPro" id="IPR039993">
    <property type="entry name" value="NDUFB10"/>
</dbReference>
<dbReference type="PANTHER" id="PTHR13094:SF1">
    <property type="entry name" value="NADH DEHYDROGENASE [UBIQUINONE] 1 BETA SUBCOMPLEX SUBUNIT 10"/>
    <property type="match status" value="1"/>
</dbReference>
<dbReference type="PANTHER" id="PTHR13094">
    <property type="entry name" value="NADH-UBIQUINONE OXIDOREDUCTASE PDSW SUBUNIT"/>
    <property type="match status" value="1"/>
</dbReference>
<keyword id="KW-0249">Electron transport</keyword>
<keyword id="KW-0472">Membrane</keyword>
<keyword id="KW-0496">Mitochondrion</keyword>
<keyword id="KW-0999">Mitochondrion inner membrane</keyword>
<keyword id="KW-1185">Reference proteome</keyword>
<keyword id="KW-0679">Respiratory chain</keyword>
<keyword id="KW-0809">Transit peptide</keyword>
<keyword id="KW-0813">Transport</keyword>
<organism>
    <name type="scientific">Neurospora crassa (strain ATCC 24698 / 74-OR23-1A / CBS 708.71 / DSM 1257 / FGSC 987)</name>
    <dbReference type="NCBI Taxonomy" id="367110"/>
    <lineage>
        <taxon>Eukaryota</taxon>
        <taxon>Fungi</taxon>
        <taxon>Dikarya</taxon>
        <taxon>Ascomycota</taxon>
        <taxon>Pezizomycotina</taxon>
        <taxon>Sordariomycetes</taxon>
        <taxon>Sordariomycetidae</taxon>
        <taxon>Sordariales</taxon>
        <taxon>Sordariaceae</taxon>
        <taxon>Neurospora</taxon>
    </lineage>
</organism>
<sequence length="104" mass="12281">MPTPESAAFLAKKPTVPPTFDGVDYNDTKRLKQAQDAIIREQWVRVMMGRLVREELSKCYYREGVNHLEKCGHLRERYLQLLSENRVQGYLFEQQNHFANQPKQ</sequence>
<gene>
    <name type="primary">nuo-12.3</name>
    <name type="ORF">NCU03093</name>
</gene>
<feature type="transit peptide" description="Mitochondrion">
    <location>
        <begin position="1"/>
        <end status="unknown"/>
    </location>
</feature>
<feature type="chain" id="PRO_0000020023" description="NADH-ubiquinone oxidoreductase 12 kDa subunit, mitochondrial">
    <location>
        <begin status="unknown"/>
        <end position="104"/>
    </location>
</feature>
<feature type="sequence conflict" description="In Ref. 1; CAA48768." evidence="2" ref="1">
    <original>L</original>
    <variation>H</variation>
    <location>
        <position position="82"/>
    </location>
</feature>